<keyword id="KW-1003">Cell membrane</keyword>
<keyword id="KW-0143">Chaperone</keyword>
<keyword id="KW-0449">Lipoprotein</keyword>
<keyword id="KW-0472">Membrane</keyword>
<keyword id="KW-0564">Palmitate</keyword>
<keyword id="KW-0653">Protein transport</keyword>
<keyword id="KW-0732">Signal</keyword>
<keyword id="KW-0812">Transmembrane</keyword>
<keyword id="KW-1133">Transmembrane helix</keyword>
<keyword id="KW-0813">Transport</keyword>
<gene>
    <name evidence="1" type="primary">yidC2</name>
    <name type="ordered locus">SPs1603</name>
</gene>
<feature type="signal peptide" evidence="1">
    <location>
        <begin position="1"/>
        <end position="23"/>
    </location>
</feature>
<feature type="chain" id="PRO_0000411432" description="Membrane protein insertase YidC 2">
    <location>
        <begin position="24"/>
        <end position="307"/>
    </location>
</feature>
<feature type="transmembrane region" description="Helical" evidence="1">
    <location>
        <begin position="58"/>
        <end position="78"/>
    </location>
</feature>
<feature type="transmembrane region" description="Helical" evidence="1">
    <location>
        <begin position="135"/>
        <end position="155"/>
    </location>
</feature>
<feature type="transmembrane region" description="Helical" evidence="1">
    <location>
        <begin position="179"/>
        <end position="199"/>
    </location>
</feature>
<feature type="transmembrane region" description="Helical" evidence="1">
    <location>
        <begin position="209"/>
        <end position="225"/>
    </location>
</feature>
<feature type="transmembrane region" description="Helical" evidence="1">
    <location>
        <begin position="231"/>
        <end position="251"/>
    </location>
</feature>
<feature type="region of interest" description="Disordered" evidence="2">
    <location>
        <begin position="263"/>
        <end position="307"/>
    </location>
</feature>
<feature type="compositionally biased region" description="Polar residues" evidence="2">
    <location>
        <begin position="271"/>
        <end position="288"/>
    </location>
</feature>
<feature type="compositionally biased region" description="Basic residues" evidence="2">
    <location>
        <begin position="293"/>
        <end position="307"/>
    </location>
</feature>
<feature type="lipid moiety-binding region" description="N-palmitoyl cysteine" evidence="1">
    <location>
        <position position="24"/>
    </location>
</feature>
<feature type="lipid moiety-binding region" description="S-diacylglycerol cysteine" evidence="1">
    <location>
        <position position="24"/>
    </location>
</feature>
<protein>
    <recommendedName>
        <fullName evidence="1">Membrane protein insertase YidC 2</fullName>
    </recommendedName>
    <alternativeName>
        <fullName evidence="1">Foldase YidC 2</fullName>
    </alternativeName>
    <alternativeName>
        <fullName evidence="1">Membrane integrase YidC 2</fullName>
    </alternativeName>
    <alternativeName>
        <fullName evidence="1">Membrane protein YidC 2</fullName>
    </alternativeName>
</protein>
<name>YIDC2_STRPQ</name>
<reference key="1">
    <citation type="journal article" date="2003" name="Genome Res.">
        <title>Genome sequence of an M3 strain of Streptococcus pyogenes reveals a large-scale genomic rearrangement in invasive strains and new insights into phage evolution.</title>
        <authorList>
            <person name="Nakagawa I."/>
            <person name="Kurokawa K."/>
            <person name="Yamashita A."/>
            <person name="Nakata M."/>
            <person name="Tomiyasu Y."/>
            <person name="Okahashi N."/>
            <person name="Kawabata S."/>
            <person name="Yamazaki K."/>
            <person name="Shiba T."/>
            <person name="Yasunaga T."/>
            <person name="Hayashi H."/>
            <person name="Hattori M."/>
            <person name="Hamada S."/>
        </authorList>
    </citation>
    <scope>NUCLEOTIDE SEQUENCE [LARGE SCALE GENOMIC DNA]</scope>
    <source>
        <strain>SSI-1</strain>
    </source>
</reference>
<organism>
    <name type="scientific">Streptococcus pyogenes serotype M3 (strain SSI-1)</name>
    <dbReference type="NCBI Taxonomy" id="193567"/>
    <lineage>
        <taxon>Bacteria</taxon>
        <taxon>Bacillati</taxon>
        <taxon>Bacillota</taxon>
        <taxon>Bacilli</taxon>
        <taxon>Lactobacillales</taxon>
        <taxon>Streptococcaceae</taxon>
        <taxon>Streptococcus</taxon>
    </lineage>
</organism>
<accession>P0DC89</accession>
<accession>Q8K8J2</accession>
<evidence type="ECO:0000255" key="1">
    <source>
        <dbReference type="HAMAP-Rule" id="MF_01811"/>
    </source>
</evidence>
<evidence type="ECO:0000256" key="2">
    <source>
        <dbReference type="SAM" id="MobiDB-lite"/>
    </source>
</evidence>
<comment type="function">
    <text evidence="1">Required for the insertion and/or proper folding and/or complex formation of integral membrane proteins into the membrane. Involved in integration of membrane proteins that insert both dependently and independently of the Sec translocase complex, as well as at least some lipoproteins.</text>
</comment>
<comment type="subcellular location">
    <subcellularLocation>
        <location evidence="1">Cell membrane</location>
        <topology evidence="1">Multi-pass membrane protein</topology>
    </subcellularLocation>
</comment>
<comment type="similarity">
    <text evidence="1">Belongs to the OXA1/ALB3/YidC family. Type 2 subfamily.</text>
</comment>
<dbReference type="EMBL" id="BA000034">
    <property type="protein sequence ID" value="BAC64698.1"/>
    <property type="molecule type" value="Genomic_DNA"/>
</dbReference>
<dbReference type="SMR" id="P0DC89"/>
<dbReference type="KEGG" id="sps:SPs1603"/>
<dbReference type="HOGENOM" id="CLU_036138_5_1_9"/>
<dbReference type="GO" id="GO:0005886">
    <property type="term" value="C:plasma membrane"/>
    <property type="evidence" value="ECO:0007669"/>
    <property type="project" value="UniProtKB-SubCell"/>
</dbReference>
<dbReference type="GO" id="GO:0032977">
    <property type="term" value="F:membrane insertase activity"/>
    <property type="evidence" value="ECO:0007669"/>
    <property type="project" value="InterPro"/>
</dbReference>
<dbReference type="GO" id="GO:0051205">
    <property type="term" value="P:protein insertion into membrane"/>
    <property type="evidence" value="ECO:0007669"/>
    <property type="project" value="TreeGrafter"/>
</dbReference>
<dbReference type="GO" id="GO:0015031">
    <property type="term" value="P:protein transport"/>
    <property type="evidence" value="ECO:0007669"/>
    <property type="project" value="UniProtKB-KW"/>
</dbReference>
<dbReference type="CDD" id="cd20070">
    <property type="entry name" value="5TM_YidC_Alb3"/>
    <property type="match status" value="1"/>
</dbReference>
<dbReference type="HAMAP" id="MF_01811">
    <property type="entry name" value="YidC_type2"/>
    <property type="match status" value="1"/>
</dbReference>
<dbReference type="InterPro" id="IPR001708">
    <property type="entry name" value="YidC/ALB3/OXA1/COX18"/>
</dbReference>
<dbReference type="InterPro" id="IPR028055">
    <property type="entry name" value="YidC/Oxa/ALB_C"/>
</dbReference>
<dbReference type="InterPro" id="IPR023060">
    <property type="entry name" value="YidC/YidC1/YidC2_Firmicutes"/>
</dbReference>
<dbReference type="InterPro" id="IPR047196">
    <property type="entry name" value="YidC_ALB_C"/>
</dbReference>
<dbReference type="NCBIfam" id="NF002687">
    <property type="entry name" value="PRK02463.1"/>
    <property type="match status" value="1"/>
</dbReference>
<dbReference type="NCBIfam" id="TIGR03592">
    <property type="entry name" value="yidC_oxa1_cterm"/>
    <property type="match status" value="1"/>
</dbReference>
<dbReference type="PANTHER" id="PTHR12428:SF65">
    <property type="entry name" value="CYTOCHROME C OXIDASE ASSEMBLY PROTEIN COX18, MITOCHONDRIAL"/>
    <property type="match status" value="1"/>
</dbReference>
<dbReference type="PANTHER" id="PTHR12428">
    <property type="entry name" value="OXA1"/>
    <property type="match status" value="1"/>
</dbReference>
<dbReference type="Pfam" id="PF02096">
    <property type="entry name" value="60KD_IMP"/>
    <property type="match status" value="1"/>
</dbReference>
<dbReference type="PROSITE" id="PS51257">
    <property type="entry name" value="PROKAR_LIPOPROTEIN"/>
    <property type="match status" value="1"/>
</dbReference>
<sequence>MKLTLNRILFSGLALSILFTLTGCVGRDAHGNPKGMIWEFLGKPMSYFIDYFANNAGLGYGLAIIIVTIIVRTLILPLGLYQSWKASYQSEKMAFLKPVFEPINKRIKQANSQEEKMAAQTELMAAQRAHGINPLGGIGCLPLLIQMPFFSAMYFAAQYTKGVSTSTFMGIDLGSRSLVLTAIIAALYFFQSWLSMMAVSEEQREQMKTMMYTMPIMMIFMSFSLPAGVGLYWLVGGFFSIIQQLITTYLLKPRLHKQIKEEYAKNPPKAYQSTSSRKDVTPSQNMEQANLPKKIKSNRNAGKQRKR</sequence>
<proteinExistence type="inferred from homology"/>